<proteinExistence type="inferred from homology"/>
<feature type="chain" id="PRO_0000162121" description="tRNA-dihydrouridine(16) synthase">
    <location>
        <begin position="1"/>
        <end position="326"/>
    </location>
</feature>
<feature type="active site" description="Proton donor" evidence="1">
    <location>
        <position position="99"/>
    </location>
</feature>
<feature type="binding site" evidence="1">
    <location>
        <begin position="8"/>
        <end position="10"/>
    </location>
    <ligand>
        <name>FMN</name>
        <dbReference type="ChEBI" id="CHEBI:58210"/>
    </ligand>
</feature>
<feature type="binding site" evidence="1">
    <location>
        <position position="69"/>
    </location>
    <ligand>
        <name>FMN</name>
        <dbReference type="ChEBI" id="CHEBI:58210"/>
    </ligand>
</feature>
<feature type="binding site" evidence="1">
    <location>
        <position position="140"/>
    </location>
    <ligand>
        <name>FMN</name>
        <dbReference type="ChEBI" id="CHEBI:58210"/>
    </ligand>
</feature>
<feature type="binding site" evidence="1">
    <location>
        <begin position="200"/>
        <end position="202"/>
    </location>
    <ligand>
        <name>FMN</name>
        <dbReference type="ChEBI" id="CHEBI:58210"/>
    </ligand>
</feature>
<feature type="binding site" evidence="1">
    <location>
        <begin position="224"/>
        <end position="225"/>
    </location>
    <ligand>
        <name>FMN</name>
        <dbReference type="ChEBI" id="CHEBI:58210"/>
    </ligand>
</feature>
<feature type="site" description="Interacts with tRNA; defines subfamily-specific binding signature" evidence="1">
    <location>
        <position position="36"/>
    </location>
</feature>
<feature type="site" description="Interacts with tRNA" evidence="1">
    <location>
        <position position="96"/>
    </location>
</feature>
<feature type="site" description="Interacts with tRNA" evidence="1">
    <location>
        <position position="177"/>
    </location>
</feature>
<feature type="site" description="Interacts with tRNA; defines subfamily-specific binding signature" evidence="1">
    <location>
        <position position="276"/>
    </location>
</feature>
<feature type="site" description="Interacts with tRNA; defines subfamily-specific binding signature" evidence="1">
    <location>
        <position position="278"/>
    </location>
</feature>
<feature type="site" description="Interacts with tRNA" evidence="1">
    <location>
        <position position="283"/>
    </location>
</feature>
<feature type="site" description="Interacts with tRNA; defines subfamily-specific binding signature" evidence="1">
    <location>
        <position position="299"/>
    </location>
</feature>
<dbReference type="EC" id="1.3.1.-" evidence="1"/>
<dbReference type="EMBL" id="AL646052">
    <property type="protein sequence ID" value="CAD15337.1"/>
    <property type="molecule type" value="Genomic_DNA"/>
</dbReference>
<dbReference type="RefSeq" id="WP_011001577.1">
    <property type="nucleotide sequence ID" value="NC_003295.1"/>
</dbReference>
<dbReference type="SMR" id="Q8XYX1"/>
<dbReference type="STRING" id="267608.RSc1635"/>
<dbReference type="EnsemblBacteria" id="CAD15337">
    <property type="protein sequence ID" value="CAD15337"/>
    <property type="gene ID" value="RSc1635"/>
</dbReference>
<dbReference type="KEGG" id="rso:RSc1635"/>
<dbReference type="eggNOG" id="COG0042">
    <property type="taxonomic scope" value="Bacteria"/>
</dbReference>
<dbReference type="HOGENOM" id="CLU_013299_0_4_4"/>
<dbReference type="Proteomes" id="UP000001436">
    <property type="component" value="Chromosome"/>
</dbReference>
<dbReference type="GO" id="GO:0050660">
    <property type="term" value="F:flavin adenine dinucleotide binding"/>
    <property type="evidence" value="ECO:0007669"/>
    <property type="project" value="InterPro"/>
</dbReference>
<dbReference type="GO" id="GO:0010181">
    <property type="term" value="F:FMN binding"/>
    <property type="evidence" value="ECO:0007669"/>
    <property type="project" value="UniProtKB-UniRule"/>
</dbReference>
<dbReference type="GO" id="GO:0000049">
    <property type="term" value="F:tRNA binding"/>
    <property type="evidence" value="ECO:0007669"/>
    <property type="project" value="UniProtKB-UniRule"/>
</dbReference>
<dbReference type="GO" id="GO:0102262">
    <property type="term" value="F:tRNA-dihydrouridine16 synthase activity"/>
    <property type="evidence" value="ECO:0007669"/>
    <property type="project" value="RHEA"/>
</dbReference>
<dbReference type="CDD" id="cd02801">
    <property type="entry name" value="DUS_like_FMN"/>
    <property type="match status" value="1"/>
</dbReference>
<dbReference type="Gene3D" id="3.20.20.70">
    <property type="entry name" value="Aldolase class I"/>
    <property type="match status" value="1"/>
</dbReference>
<dbReference type="Gene3D" id="1.20.225.30">
    <property type="entry name" value="Dihydrouridine synthase, C-terminal recognition domain"/>
    <property type="match status" value="1"/>
</dbReference>
<dbReference type="HAMAP" id="MF_02043">
    <property type="entry name" value="DusC_subfam"/>
    <property type="match status" value="1"/>
</dbReference>
<dbReference type="InterPro" id="IPR013785">
    <property type="entry name" value="Aldolase_TIM"/>
</dbReference>
<dbReference type="InterPro" id="IPR035587">
    <property type="entry name" value="DUS-like_FMN-bd"/>
</dbReference>
<dbReference type="InterPro" id="IPR001269">
    <property type="entry name" value="DUS_fam"/>
</dbReference>
<dbReference type="InterPro" id="IPR032886">
    <property type="entry name" value="DusC"/>
</dbReference>
<dbReference type="InterPro" id="IPR042270">
    <property type="entry name" value="DusC_C"/>
</dbReference>
<dbReference type="InterPro" id="IPR018517">
    <property type="entry name" value="tRNA_hU_synthase_CS"/>
</dbReference>
<dbReference type="PANTHER" id="PTHR11082">
    <property type="entry name" value="TRNA-DIHYDROURIDINE SYNTHASE"/>
    <property type="match status" value="1"/>
</dbReference>
<dbReference type="PANTHER" id="PTHR11082:SF26">
    <property type="entry name" value="TRNA-DIHYDROURIDINE(16) SYNTHASE"/>
    <property type="match status" value="1"/>
</dbReference>
<dbReference type="Pfam" id="PF01207">
    <property type="entry name" value="Dus"/>
    <property type="match status" value="1"/>
</dbReference>
<dbReference type="PIRSF" id="PIRSF006621">
    <property type="entry name" value="Dus"/>
    <property type="match status" value="1"/>
</dbReference>
<dbReference type="SUPFAM" id="SSF51395">
    <property type="entry name" value="FMN-linked oxidoreductases"/>
    <property type="match status" value="1"/>
</dbReference>
<dbReference type="PROSITE" id="PS01136">
    <property type="entry name" value="UPF0034"/>
    <property type="match status" value="1"/>
</dbReference>
<reference key="1">
    <citation type="journal article" date="2002" name="Nature">
        <title>Genome sequence of the plant pathogen Ralstonia solanacearum.</title>
        <authorList>
            <person name="Salanoubat M."/>
            <person name="Genin S."/>
            <person name="Artiguenave F."/>
            <person name="Gouzy J."/>
            <person name="Mangenot S."/>
            <person name="Arlat M."/>
            <person name="Billault A."/>
            <person name="Brottier P."/>
            <person name="Camus J.-C."/>
            <person name="Cattolico L."/>
            <person name="Chandler M."/>
            <person name="Choisne N."/>
            <person name="Claudel-Renard C."/>
            <person name="Cunnac S."/>
            <person name="Demange N."/>
            <person name="Gaspin C."/>
            <person name="Lavie M."/>
            <person name="Moisan A."/>
            <person name="Robert C."/>
            <person name="Saurin W."/>
            <person name="Schiex T."/>
            <person name="Siguier P."/>
            <person name="Thebault P."/>
            <person name="Whalen M."/>
            <person name="Wincker P."/>
            <person name="Levy M."/>
            <person name="Weissenbach J."/>
            <person name="Boucher C.A."/>
        </authorList>
    </citation>
    <scope>NUCLEOTIDE SEQUENCE [LARGE SCALE GENOMIC DNA]</scope>
    <source>
        <strain>ATCC BAA-1114 / GMI1000</strain>
    </source>
</reference>
<protein>
    <recommendedName>
        <fullName evidence="1">tRNA-dihydrouridine(16) synthase</fullName>
        <ecNumber evidence="1">1.3.1.-</ecNumber>
    </recommendedName>
    <alternativeName>
        <fullName evidence="1">U16-specific dihydrouridine synthase</fullName>
        <shortName evidence="1">U16-specific Dus</shortName>
    </alternativeName>
    <alternativeName>
        <fullName evidence="1">tRNA-dihydrouridine synthase C</fullName>
    </alternativeName>
</protein>
<comment type="function">
    <text evidence="1">Catalyzes the synthesis of 5,6-dihydrouridine (D), a modified base found in the D-loop of most tRNAs, via the reduction of the C5-C6 double bond in target uridines. Specifically modifies U16 in tRNAs.</text>
</comment>
<comment type="catalytic activity">
    <reaction evidence="1">
        <text>5,6-dihydrouridine(16) in tRNA + NADP(+) = uridine(16) in tRNA + NADPH + H(+)</text>
        <dbReference type="Rhea" id="RHEA:53376"/>
        <dbReference type="Rhea" id="RHEA-COMP:13543"/>
        <dbReference type="Rhea" id="RHEA-COMP:13544"/>
        <dbReference type="ChEBI" id="CHEBI:15378"/>
        <dbReference type="ChEBI" id="CHEBI:57783"/>
        <dbReference type="ChEBI" id="CHEBI:58349"/>
        <dbReference type="ChEBI" id="CHEBI:65315"/>
        <dbReference type="ChEBI" id="CHEBI:74443"/>
    </reaction>
</comment>
<comment type="catalytic activity">
    <reaction evidence="1">
        <text>5,6-dihydrouridine(16) in tRNA + NAD(+) = uridine(16) in tRNA + NADH + H(+)</text>
        <dbReference type="Rhea" id="RHEA:53380"/>
        <dbReference type="Rhea" id="RHEA-COMP:13543"/>
        <dbReference type="Rhea" id="RHEA-COMP:13544"/>
        <dbReference type="ChEBI" id="CHEBI:15378"/>
        <dbReference type="ChEBI" id="CHEBI:57540"/>
        <dbReference type="ChEBI" id="CHEBI:57945"/>
        <dbReference type="ChEBI" id="CHEBI:65315"/>
        <dbReference type="ChEBI" id="CHEBI:74443"/>
    </reaction>
</comment>
<comment type="cofactor">
    <cofactor evidence="1">
        <name>FMN</name>
        <dbReference type="ChEBI" id="CHEBI:58210"/>
    </cofactor>
</comment>
<comment type="similarity">
    <text evidence="1">Belongs to the Dus family. DusC subfamily.</text>
</comment>
<accession>Q8XYX1</accession>
<sequence>MSRLLLAPMEGVADFVMRDVLTSVGGYDGCVSEFVRVTGSLLPARTYERETPEIRNGGYTASGTPMVIQLLGSDPEWLARNAAQAATVSPHGIDLNFGCPAKVVNRHGGGAMLLATPELLHRIVSTVRAAVPARIAVTAKMRLGVSDTSLAIACATALAEGGAASLVVHARTRDHGYRPPAHWDWIARIADAVRVPVVANGEVWTVDDWARCRAVSGCDDVMIGRGAVSDPFLALRIRGQMARQPSDAEWPLVLGCLADYLKKLRARIAIHHEHGRVKLWLGYLKRTWPQAAELHDAIRRLQDSAEILGVIEHALARIGQQSAPAG</sequence>
<name>DUSC_RALN1</name>
<gene>
    <name evidence="1" type="primary">dusC</name>
    <name type="ordered locus">RSc1635</name>
    <name type="ORF">RS03998</name>
</gene>
<keyword id="KW-0285">Flavoprotein</keyword>
<keyword id="KW-0288">FMN</keyword>
<keyword id="KW-0521">NADP</keyword>
<keyword id="KW-0560">Oxidoreductase</keyword>
<keyword id="KW-1185">Reference proteome</keyword>
<keyword id="KW-0694">RNA-binding</keyword>
<keyword id="KW-0819">tRNA processing</keyword>
<keyword id="KW-0820">tRNA-binding</keyword>
<organism>
    <name type="scientific">Ralstonia nicotianae (strain ATCC BAA-1114 / GMI1000)</name>
    <name type="common">Ralstonia solanacearum</name>
    <dbReference type="NCBI Taxonomy" id="267608"/>
    <lineage>
        <taxon>Bacteria</taxon>
        <taxon>Pseudomonadati</taxon>
        <taxon>Pseudomonadota</taxon>
        <taxon>Betaproteobacteria</taxon>
        <taxon>Burkholderiales</taxon>
        <taxon>Burkholderiaceae</taxon>
        <taxon>Ralstonia</taxon>
        <taxon>Ralstonia solanacearum species complex</taxon>
    </lineage>
</organism>
<evidence type="ECO:0000255" key="1">
    <source>
        <dbReference type="HAMAP-Rule" id="MF_02043"/>
    </source>
</evidence>